<accession>D4B1Z7</accession>
<sequence length="565" mass="61795">MKIPSQQVLLALPLLASPAQSYPGKHPRCSAGDACWPKEHVWQDFNSTISGRLIRTFPAAAVCHTAQYDAAACSVAKERWTDSFWRTNQTGAYSAILWELGEKGQCFINTPKEDRCDQGIVPYYSVSASGVKDIEKAVKFADKHDLYLVVKNTGHDHLGRSSGSGAFSIWTHNLKGKEWHKSFKPKGAPSNVSGIPAVTLQAGEQLLDVYKAAAAEGVTFAGGSAQTVGAAGGFMTGGGVSPFSHFYGLAVDNVLEVNLVTAQGKAKTINQYTDPDYFYALRGGGGSAWGVITSVTYKTHPKPTHIRVGIAQLNITTEDSRRVVIEKTLQALPDITEAGWVGYGVYATEKSNPTAFQVIFLQPNATMENFNKTFEPMNEIATLPGVTGGAVSYVFPDFLEYSKNFLRDPNIATNVIDASRLVSRQVLTERARDLVDLMFEYPTTGPGFNSIVKVNSDERDNTAVHSSFKNSRALISFSVDWADNASEKEKKAAKKTSAEVSKRLAEIVGKETGTYLNEASPYEPDWQNAFWGDKYARLLSIKRRIDPKNLFVCNRCVGTDIILEP</sequence>
<feature type="signal peptide" evidence="2">
    <location>
        <begin position="1"/>
        <end position="21"/>
    </location>
</feature>
<feature type="chain" id="PRO_0000434672" description="Uncharacterized FAD-linked oxidoreductase ARB_02478">
    <location>
        <begin position="22"/>
        <end position="565"/>
    </location>
</feature>
<feature type="domain" description="FAD-binding PCMH-type" evidence="4">
    <location>
        <begin position="118"/>
        <end position="302"/>
    </location>
</feature>
<feature type="modified residue" description="Pros-8alpha-FAD histidine" evidence="1">
    <location>
        <position position="155"/>
    </location>
</feature>
<feature type="glycosylation site" description="N-linked (GlcNAc...) asparagine" evidence="3">
    <location>
        <position position="46"/>
    </location>
</feature>
<feature type="glycosylation site" description="N-linked (GlcNAc...) asparagine" evidence="3">
    <location>
        <position position="88"/>
    </location>
</feature>
<feature type="glycosylation site" description="N-linked (GlcNAc...) asparagine" evidence="3">
    <location>
        <position position="191"/>
    </location>
</feature>
<feature type="glycosylation site" description="N-linked (GlcNAc...) asparagine" evidence="3">
    <location>
        <position position="314"/>
    </location>
</feature>
<feature type="glycosylation site" description="N-linked (GlcNAc...) asparagine" evidence="3">
    <location>
        <position position="364"/>
    </location>
</feature>
<feature type="glycosylation site" description="N-linked (GlcNAc...) asparagine" evidence="3">
    <location>
        <position position="371"/>
    </location>
</feature>
<feature type="glycosylation site" description="N-linked (GlcNAc...) asparagine" evidence="3">
    <location>
        <position position="484"/>
    </location>
</feature>
<comment type="cofactor">
    <cofactor evidence="6">
        <name>FAD</name>
        <dbReference type="ChEBI" id="CHEBI:57692"/>
    </cofactor>
</comment>
<comment type="subcellular location">
    <subcellularLocation>
        <location evidence="5">Secreted</location>
    </subcellularLocation>
</comment>
<comment type="similarity">
    <text evidence="6">Belongs to the oxygen-dependent FAD-linked oxidoreductase family.</text>
</comment>
<evidence type="ECO:0000250" key="1">
    <source>
        <dbReference type="UniProtKB" id="P08159"/>
    </source>
</evidence>
<evidence type="ECO:0000255" key="2"/>
<evidence type="ECO:0000255" key="3">
    <source>
        <dbReference type="PROSITE-ProRule" id="PRU00498"/>
    </source>
</evidence>
<evidence type="ECO:0000255" key="4">
    <source>
        <dbReference type="PROSITE-ProRule" id="PRU00718"/>
    </source>
</evidence>
<evidence type="ECO:0000269" key="5">
    <source>
    </source>
</evidence>
<evidence type="ECO:0000305" key="6"/>
<protein>
    <recommendedName>
        <fullName evidence="6">Uncharacterized FAD-linked oxidoreductase ARB_02478</fullName>
        <ecNumber evidence="6">1.-.-.-</ecNumber>
    </recommendedName>
</protein>
<reference key="1">
    <citation type="journal article" date="2011" name="Genome Biol.">
        <title>Comparative and functional genomics provide insights into the pathogenicity of dermatophytic fungi.</title>
        <authorList>
            <person name="Burmester A."/>
            <person name="Shelest E."/>
            <person name="Gloeckner G."/>
            <person name="Heddergott C."/>
            <person name="Schindler S."/>
            <person name="Staib P."/>
            <person name="Heidel A."/>
            <person name="Felder M."/>
            <person name="Petzold A."/>
            <person name="Szafranski K."/>
            <person name="Feuermann M."/>
            <person name="Pedruzzi I."/>
            <person name="Priebe S."/>
            <person name="Groth M."/>
            <person name="Winkler R."/>
            <person name="Li W."/>
            <person name="Kniemeyer O."/>
            <person name="Schroeckh V."/>
            <person name="Hertweck C."/>
            <person name="Hube B."/>
            <person name="White T.C."/>
            <person name="Platzer M."/>
            <person name="Guthke R."/>
            <person name="Heitman J."/>
            <person name="Woestemeyer J."/>
            <person name="Zipfel P.F."/>
            <person name="Monod M."/>
            <person name="Brakhage A.A."/>
        </authorList>
    </citation>
    <scope>NUCLEOTIDE SEQUENCE [LARGE SCALE GENOMIC DNA]</scope>
    <source>
        <strain>ATCC MYA-4681 / CBS 112371</strain>
    </source>
</reference>
<reference key="2">
    <citation type="journal article" date="2011" name="Proteomics">
        <title>Identification of novel secreted proteases during extracellular proteolysis by dermatophytes at acidic pH.</title>
        <authorList>
            <person name="Sriranganadane D."/>
            <person name="Waridel P."/>
            <person name="Salamin K."/>
            <person name="Feuermann M."/>
            <person name="Mignon B."/>
            <person name="Staib P."/>
            <person name="Neuhaus J.M."/>
            <person name="Quadroni M."/>
            <person name="Monod M."/>
        </authorList>
    </citation>
    <scope>IDENTIFICATION BY MASS SPECTROMETRY</scope>
    <scope>SUBCELLULAR LOCATION</scope>
</reference>
<name>A2478_ARTBC</name>
<dbReference type="EC" id="1.-.-.-" evidence="6"/>
<dbReference type="EMBL" id="ABSU01000028">
    <property type="protein sequence ID" value="EFE30558.1"/>
    <property type="molecule type" value="Genomic_DNA"/>
</dbReference>
<dbReference type="RefSeq" id="XP_003011198.1">
    <property type="nucleotide sequence ID" value="XM_003011152.1"/>
</dbReference>
<dbReference type="SMR" id="D4B1Z7"/>
<dbReference type="GeneID" id="9523853"/>
<dbReference type="KEGG" id="abe:ARB_02478"/>
<dbReference type="eggNOG" id="ENOG502QQWK">
    <property type="taxonomic scope" value="Eukaryota"/>
</dbReference>
<dbReference type="HOGENOM" id="CLU_018354_4_4_1"/>
<dbReference type="OMA" id="VCNRCVG"/>
<dbReference type="Proteomes" id="UP000008866">
    <property type="component" value="Unassembled WGS sequence"/>
</dbReference>
<dbReference type="GO" id="GO:0005576">
    <property type="term" value="C:extracellular region"/>
    <property type="evidence" value="ECO:0007669"/>
    <property type="project" value="UniProtKB-SubCell"/>
</dbReference>
<dbReference type="GO" id="GO:0071949">
    <property type="term" value="F:FAD binding"/>
    <property type="evidence" value="ECO:0007669"/>
    <property type="project" value="InterPro"/>
</dbReference>
<dbReference type="GO" id="GO:0016491">
    <property type="term" value="F:oxidoreductase activity"/>
    <property type="evidence" value="ECO:0007669"/>
    <property type="project" value="UniProtKB-KW"/>
</dbReference>
<dbReference type="Gene3D" id="3.30.465.10">
    <property type="match status" value="2"/>
</dbReference>
<dbReference type="InterPro" id="IPR012951">
    <property type="entry name" value="BBE"/>
</dbReference>
<dbReference type="InterPro" id="IPR016166">
    <property type="entry name" value="FAD-bd_PCMH"/>
</dbReference>
<dbReference type="InterPro" id="IPR036318">
    <property type="entry name" value="FAD-bd_PCMH-like_sf"/>
</dbReference>
<dbReference type="InterPro" id="IPR016169">
    <property type="entry name" value="FAD-bd_PCMH_sub2"/>
</dbReference>
<dbReference type="InterPro" id="IPR050432">
    <property type="entry name" value="FAD-linked_Oxidoreductases_BP"/>
</dbReference>
<dbReference type="InterPro" id="IPR006094">
    <property type="entry name" value="Oxid_FAD_bind_N"/>
</dbReference>
<dbReference type="PANTHER" id="PTHR13878:SF91">
    <property type="entry name" value="FAD BINDING DOMAIN PROTEIN (AFU_ORTHOLOGUE AFUA_6G12070)-RELATED"/>
    <property type="match status" value="1"/>
</dbReference>
<dbReference type="PANTHER" id="PTHR13878">
    <property type="entry name" value="GULONOLACTONE OXIDASE"/>
    <property type="match status" value="1"/>
</dbReference>
<dbReference type="Pfam" id="PF08031">
    <property type="entry name" value="BBE"/>
    <property type="match status" value="1"/>
</dbReference>
<dbReference type="Pfam" id="PF01565">
    <property type="entry name" value="FAD_binding_4"/>
    <property type="match status" value="1"/>
</dbReference>
<dbReference type="SUPFAM" id="SSF56176">
    <property type="entry name" value="FAD-binding/transporter-associated domain-like"/>
    <property type="match status" value="1"/>
</dbReference>
<dbReference type="PROSITE" id="PS51387">
    <property type="entry name" value="FAD_PCMH"/>
    <property type="match status" value="1"/>
</dbReference>
<gene>
    <name type="ORF">ARB_02478</name>
</gene>
<proteinExistence type="evidence at protein level"/>
<organism>
    <name type="scientific">Arthroderma benhamiae (strain ATCC MYA-4681 / CBS 112371)</name>
    <name type="common">Trichophyton mentagrophytes</name>
    <dbReference type="NCBI Taxonomy" id="663331"/>
    <lineage>
        <taxon>Eukaryota</taxon>
        <taxon>Fungi</taxon>
        <taxon>Dikarya</taxon>
        <taxon>Ascomycota</taxon>
        <taxon>Pezizomycotina</taxon>
        <taxon>Eurotiomycetes</taxon>
        <taxon>Eurotiomycetidae</taxon>
        <taxon>Onygenales</taxon>
        <taxon>Arthrodermataceae</taxon>
        <taxon>Trichophyton</taxon>
    </lineage>
</organism>
<keyword id="KW-0274">FAD</keyword>
<keyword id="KW-0285">Flavoprotein</keyword>
<keyword id="KW-0325">Glycoprotein</keyword>
<keyword id="KW-0560">Oxidoreductase</keyword>
<keyword id="KW-1185">Reference proteome</keyword>
<keyword id="KW-0964">Secreted</keyword>
<keyword id="KW-0732">Signal</keyword>